<evidence type="ECO:0000250" key="1">
    <source>
        <dbReference type="UniProtKB" id="Q9NYI0"/>
    </source>
</evidence>
<evidence type="ECO:0000255" key="2"/>
<evidence type="ECO:0000255" key="3">
    <source>
        <dbReference type="PROSITE-ProRule" id="PRU00145"/>
    </source>
</evidence>
<evidence type="ECO:0000255" key="4">
    <source>
        <dbReference type="PROSITE-ProRule" id="PRU00189"/>
    </source>
</evidence>
<evidence type="ECO:0000256" key="5">
    <source>
        <dbReference type="SAM" id="MobiDB-lite"/>
    </source>
</evidence>
<evidence type="ECO:0000269" key="6">
    <source>
    </source>
</evidence>
<evidence type="ECO:0000269" key="7">
    <source>
    </source>
</evidence>
<evidence type="ECO:0000303" key="8">
    <source>
    </source>
</evidence>
<evidence type="ECO:0000303" key="9">
    <source>
    </source>
</evidence>
<evidence type="ECO:0000303" key="10">
    <source>
    </source>
</evidence>
<evidence type="ECO:0000303" key="11">
    <source>
    </source>
</evidence>
<evidence type="ECO:0000305" key="12"/>
<evidence type="ECO:0007744" key="13">
    <source>
    </source>
</evidence>
<evidence type="ECO:0007744" key="14">
    <source>
    </source>
</evidence>
<evidence type="ECO:0007744" key="15">
    <source>
    </source>
</evidence>
<evidence type="ECO:0007744" key="16">
    <source>
    </source>
</evidence>
<sequence length="1037" mass="114722">MEGRNAAAEPFVWVNSASAHSQSVAKAKYEFLFGKSEEKTPDSSDHGGSTLLPPTVTNEFPEYGTMEEGGEGLRASLDFDAKSPPCRLPGQQAVHLLAGQDSILNSVTEGPNDAPQCHPQEQSLQPIDSLISALKATEARIASGTFQATKVLDKDANFSVYQVDKELSTASHKPQRAHRTFPVGPGKSPDIPLSAEVPTEENLSLHIQEDLSALLPEEAQAHRSQITNYRRQGPLRVPESACPVSSSSAGSHNPVDRVGALREQRSDLGREHPRGYDRGGSMGRQGRIKHVEFQGVEILWTGEEAESRHPPERTASPVSKEFAKRPSHSSPACGVCSTSTHLTGDVWDETCKAPSERPGTSAGTLSPMPLGESGEDDVFLRESKEHLEENFAIQGDKERILDQEEHLRGDDDILGPGYTEDSTDVYSSQFETILDNTSLYYSAESLETLYSEPDSYFSFEMPLTPMIQQRIKEGGQFLERTSVGGQHDVLSVSADGGIVMGYSAGITNGLHDSANSVYTRGPQEIAFWGSRDRCFAEGKTTGVDAGSEMGSTDILEKETTESLSNGTNSNVEAAKRLAKRLYHLDRFKRSDVAKHLGKNNEFSKLVAEEYLKFFDFTGMTLDQSLRYFLKAFSLVGETQERERVLIHFSNRYFSCNPDTITSKDGVHCLTCAMMLLNTDLHGHVNIGKKMTCQEFITNLQGVNEGGDFSKDLLKALYNSIKNEKLEWAVDDEEKKKSPSEGTDEKANGTHPKTISRIGSTTNPFLDIPHDPNAAVYKSGFLARKIHADMDGKKTPRGKRGWKTFYAVLKGTVLYLQKDEYKPEKSLSDEDLKNAVSVHHALASKATDYEKKPNVFKLKTADWRVLLFQTQSPEEMQGWINKINCVAAVFSAPPFPAAIGSQKKFSRPLLPATTTKLSQEEQLKSHESKLKQITTELAEHRSYPPDKKVKAKDVDEYKLKDHYLEFEKTRYEIYVSVLKEGGKELLTTDGNEPVGLKKSHSSPSLNPDASPVTAKVKRNVSERKDHRPETPGIKQKVT</sequence>
<proteinExistence type="evidence at protein level"/>
<accession>Q2PFD7</accession>
<accession>Q3TTA1</accession>
<accession>Q80TN6</accession>
<accession>Q80UZ7</accession>
<accession>Q8CEA6</accession>
<protein>
    <recommendedName>
        <fullName>PH and SEC7 domain-containing protein 3</fullName>
    </recommendedName>
    <alternativeName>
        <fullName>Exchange factor for ADP-ribosylation factor guanine nucleotide factor 6 D</fullName>
        <shortName>Exchange factor for ARF6 D</shortName>
    </alternativeName>
    <alternativeName>
        <fullName>Pleckstrin homology and SEC7 domain-containing protein 3</fullName>
    </alternativeName>
</protein>
<comment type="function">
    <text evidence="6">Guanine nucleotide exchange factor for ARF6.</text>
</comment>
<comment type="subcellular location">
    <subcellularLocation>
        <location evidence="7">Cell membrane</location>
    </subcellularLocation>
    <subcellularLocation>
        <location evidence="7">Cell projection</location>
        <location evidence="7">Ruffle membrane</location>
    </subcellularLocation>
    <subcellularLocation>
        <location evidence="6">Postsynaptic density</location>
    </subcellularLocation>
    <text evidence="7">In interphase associated with the plasma membrane, in particular with membrane ruffling regions.</text>
</comment>
<comment type="alternative products">
    <event type="alternative splicing"/>
    <isoform>
        <id>Q2PFD7-1</id>
        <name>1</name>
        <sequence type="displayed"/>
    </isoform>
    <isoform>
        <id>Q2PFD7-2</id>
        <name>2</name>
        <sequence type="described" ref="VSP_029160"/>
    </isoform>
    <isoform>
        <id>Q2PFD7-3</id>
        <name>3</name>
        <sequence type="described" ref="VSP_029157 VSP_029159 VSP_029160"/>
    </isoform>
    <isoform>
        <id>Q2PFD7-4</id>
        <name>4</name>
        <sequence type="described" ref="VSP_029161"/>
    </isoform>
    <isoform>
        <id>Q2PFD7-5</id>
        <name>5</name>
        <sequence type="described" ref="VSP_029158"/>
    </isoform>
</comment>
<comment type="tissue specificity">
    <text evidence="6">Ubiquitously expressed, with highest levels in liver. Present in brain, with highest levels in olfactory bulb, cortex, hippocampal pyramidal cell layer and cerebellar granule cell layer (at protein level).</text>
</comment>
<comment type="developmental stage">
    <text evidence="6">Expressed only in spinal cord at 13 dpc. At 18 dpc and P0, appears weakly in forebrain. Expression in brain increases after birth and peaks at P10.</text>
</comment>
<organism>
    <name type="scientific">Mus musculus</name>
    <name type="common">Mouse</name>
    <dbReference type="NCBI Taxonomy" id="10090"/>
    <lineage>
        <taxon>Eukaryota</taxon>
        <taxon>Metazoa</taxon>
        <taxon>Chordata</taxon>
        <taxon>Craniata</taxon>
        <taxon>Vertebrata</taxon>
        <taxon>Euteleostomi</taxon>
        <taxon>Mammalia</taxon>
        <taxon>Eutheria</taxon>
        <taxon>Euarchontoglires</taxon>
        <taxon>Glires</taxon>
        <taxon>Rodentia</taxon>
        <taxon>Myomorpha</taxon>
        <taxon>Muroidea</taxon>
        <taxon>Muridae</taxon>
        <taxon>Murinae</taxon>
        <taxon>Mus</taxon>
        <taxon>Mus</taxon>
    </lineage>
</organism>
<dbReference type="EMBL" id="AB220685">
    <property type="protein sequence ID" value="BAE73186.1"/>
    <property type="molecule type" value="mRNA"/>
</dbReference>
<dbReference type="EMBL" id="AK028684">
    <property type="protein sequence ID" value="BAC26065.1"/>
    <property type="molecule type" value="mRNA"/>
</dbReference>
<dbReference type="EMBL" id="AK161498">
    <property type="protein sequence ID" value="BAE36424.1"/>
    <property type="molecule type" value="mRNA"/>
</dbReference>
<dbReference type="EMBL" id="AK122405">
    <property type="protein sequence ID" value="BAC65687.1"/>
    <property type="molecule type" value="mRNA"/>
</dbReference>
<dbReference type="EMBL" id="BC042208">
    <property type="protein sequence ID" value="AAH42208.1"/>
    <property type="molecule type" value="mRNA"/>
</dbReference>
<dbReference type="CCDS" id="CCDS22340.1">
    <molecule id="Q2PFD7-3"/>
</dbReference>
<dbReference type="CCDS" id="CCDS40355.3">
    <molecule id="Q2PFD7-5"/>
</dbReference>
<dbReference type="RefSeq" id="NP_001406687.1">
    <molecule id="Q2PFD7-2"/>
    <property type="nucleotide sequence ID" value="NM_001419758.1"/>
</dbReference>
<dbReference type="RefSeq" id="NP_081902.1">
    <property type="nucleotide sequence ID" value="NM_027626.1"/>
</dbReference>
<dbReference type="RefSeq" id="NP_084539.2">
    <molecule id="Q2PFD7-3"/>
    <property type="nucleotide sequence ID" value="NM_030263.6"/>
</dbReference>
<dbReference type="RefSeq" id="NP_808366.2">
    <molecule id="Q2PFD7-5"/>
    <property type="nucleotide sequence ID" value="NM_177698.6"/>
</dbReference>
<dbReference type="RefSeq" id="XP_017168191.1">
    <property type="nucleotide sequence ID" value="XM_017312702.1"/>
</dbReference>
<dbReference type="SMR" id="Q2PFD7"/>
<dbReference type="BioGRID" id="231513">
    <property type="interactions" value="16"/>
</dbReference>
<dbReference type="FunCoup" id="Q2PFD7">
    <property type="interactions" value="394"/>
</dbReference>
<dbReference type="IntAct" id="Q2PFD7">
    <property type="interactions" value="2"/>
</dbReference>
<dbReference type="MINT" id="Q2PFD7"/>
<dbReference type="STRING" id="10090.ENSMUSP00000096293"/>
<dbReference type="GlyGen" id="Q2PFD7">
    <property type="glycosylation" value="3 sites, 2 N-linked glycans (2 sites), 1 O-linked glycan (1 site)"/>
</dbReference>
<dbReference type="iPTMnet" id="Q2PFD7"/>
<dbReference type="PhosphoSitePlus" id="Q2PFD7"/>
<dbReference type="SwissPalm" id="Q2PFD7"/>
<dbReference type="jPOST" id="Q2PFD7"/>
<dbReference type="PaxDb" id="10090-ENSMUSP00000091178"/>
<dbReference type="PeptideAtlas" id="Q2PFD7"/>
<dbReference type="ProteomicsDB" id="291692">
    <molecule id="Q2PFD7-1"/>
</dbReference>
<dbReference type="ProteomicsDB" id="291693">
    <molecule id="Q2PFD7-2"/>
</dbReference>
<dbReference type="ProteomicsDB" id="291694">
    <molecule id="Q2PFD7-3"/>
</dbReference>
<dbReference type="ProteomicsDB" id="291695">
    <molecule id="Q2PFD7-4"/>
</dbReference>
<dbReference type="ProteomicsDB" id="291696">
    <molecule id="Q2PFD7-5"/>
</dbReference>
<dbReference type="Pumba" id="Q2PFD7"/>
<dbReference type="Antibodypedia" id="9043">
    <property type="antibodies" value="153 antibodies from 23 providers"/>
</dbReference>
<dbReference type="DNASU" id="234353"/>
<dbReference type="Ensembl" id="ENSMUST00000093468.12">
    <molecule id="Q2PFD7-3"/>
    <property type="protein sequence ID" value="ENSMUSP00000091178.6"/>
    <property type="gene ID" value="ENSMUSG00000030465.21"/>
</dbReference>
<dbReference type="Ensembl" id="ENSMUST00000093469.11">
    <molecule id="Q2PFD7-5"/>
    <property type="protein sequence ID" value="ENSMUSP00000091179.5"/>
    <property type="gene ID" value="ENSMUSG00000030465.21"/>
</dbReference>
<dbReference type="GeneID" id="234353"/>
<dbReference type="KEGG" id="mmu:234353"/>
<dbReference type="UCSC" id="uc009lvz.2">
    <molecule id="Q2PFD7-3"/>
    <property type="organism name" value="mouse"/>
</dbReference>
<dbReference type="UCSC" id="uc009lwc.1">
    <molecule id="Q2PFD7-2"/>
    <property type="organism name" value="mouse"/>
</dbReference>
<dbReference type="UCSC" id="uc057alt.1">
    <molecule id="Q2PFD7-5"/>
    <property type="organism name" value="mouse"/>
</dbReference>
<dbReference type="AGR" id="MGI:1918215"/>
<dbReference type="CTD" id="23362"/>
<dbReference type="MGI" id="MGI:1918215">
    <property type="gene designation" value="Psd3"/>
</dbReference>
<dbReference type="VEuPathDB" id="HostDB:ENSMUSG00000030465"/>
<dbReference type="eggNOG" id="KOG0932">
    <property type="taxonomic scope" value="Eukaryota"/>
</dbReference>
<dbReference type="GeneTree" id="ENSGT00940000156591"/>
<dbReference type="HOGENOM" id="CLU_011021_1_1_1"/>
<dbReference type="InParanoid" id="Q2PFD7"/>
<dbReference type="OMA" id="LEWTINE"/>
<dbReference type="PhylomeDB" id="Q2PFD7"/>
<dbReference type="TreeFam" id="TF319755"/>
<dbReference type="BioGRID-ORCS" id="234353">
    <property type="hits" value="4 hits in 75 CRISPR screens"/>
</dbReference>
<dbReference type="ChiTaRS" id="Psd3">
    <property type="organism name" value="mouse"/>
</dbReference>
<dbReference type="PRO" id="PR:Q2PFD7"/>
<dbReference type="Proteomes" id="UP000000589">
    <property type="component" value="Chromosome 8"/>
</dbReference>
<dbReference type="RNAct" id="Q2PFD7">
    <property type="molecule type" value="protein"/>
</dbReference>
<dbReference type="Bgee" id="ENSMUSG00000030465">
    <property type="expression patterns" value="Expressed in subiculum and 237 other cell types or tissues"/>
</dbReference>
<dbReference type="ExpressionAtlas" id="Q2PFD7">
    <property type="expression patterns" value="baseline and differential"/>
</dbReference>
<dbReference type="GO" id="GO:0098978">
    <property type="term" value="C:glutamatergic synapse"/>
    <property type="evidence" value="ECO:0000314"/>
    <property type="project" value="SynGO"/>
</dbReference>
<dbReference type="GO" id="GO:0016020">
    <property type="term" value="C:membrane"/>
    <property type="evidence" value="ECO:0000314"/>
    <property type="project" value="MGI"/>
</dbReference>
<dbReference type="GO" id="GO:0098794">
    <property type="term" value="C:postsynapse"/>
    <property type="evidence" value="ECO:0000314"/>
    <property type="project" value="SynGO"/>
</dbReference>
<dbReference type="GO" id="GO:0014069">
    <property type="term" value="C:postsynaptic density"/>
    <property type="evidence" value="ECO:0007669"/>
    <property type="project" value="UniProtKB-SubCell"/>
</dbReference>
<dbReference type="GO" id="GO:0032587">
    <property type="term" value="C:ruffle membrane"/>
    <property type="evidence" value="ECO:0000314"/>
    <property type="project" value="UniProtKB"/>
</dbReference>
<dbReference type="GO" id="GO:0005085">
    <property type="term" value="F:guanyl-nucleotide exchange factor activity"/>
    <property type="evidence" value="ECO:0000314"/>
    <property type="project" value="MGI"/>
</dbReference>
<dbReference type="GO" id="GO:0032011">
    <property type="term" value="P:ARF protein signal transduction"/>
    <property type="evidence" value="ECO:0000305"/>
    <property type="project" value="MGI"/>
</dbReference>
<dbReference type="GO" id="GO:0032012">
    <property type="term" value="P:regulation of ARF protein signal transduction"/>
    <property type="evidence" value="ECO:0007669"/>
    <property type="project" value="InterPro"/>
</dbReference>
<dbReference type="CDD" id="cd13295">
    <property type="entry name" value="PH_EFA6"/>
    <property type="match status" value="1"/>
</dbReference>
<dbReference type="CDD" id="cd00171">
    <property type="entry name" value="Sec7"/>
    <property type="match status" value="1"/>
</dbReference>
<dbReference type="FunFam" id="1.10.1000.11:FF:000004">
    <property type="entry name" value="PH and SEC7 domain-containing protein 2"/>
    <property type="match status" value="1"/>
</dbReference>
<dbReference type="FunFam" id="2.30.29.30:FF:000054">
    <property type="entry name" value="PH and SEC7 domain-containing protein 3"/>
    <property type="match status" value="1"/>
</dbReference>
<dbReference type="Gene3D" id="1.10.1000.11">
    <property type="entry name" value="Arf Nucleotide-binding Site Opener,domain 2"/>
    <property type="match status" value="1"/>
</dbReference>
<dbReference type="Gene3D" id="2.30.29.30">
    <property type="entry name" value="Pleckstrin-homology domain (PH domain)/Phosphotyrosine-binding domain (PTB)"/>
    <property type="match status" value="1"/>
</dbReference>
<dbReference type="InterPro" id="IPR011993">
    <property type="entry name" value="PH-like_dom_sf"/>
</dbReference>
<dbReference type="InterPro" id="IPR041681">
    <property type="entry name" value="PH_9"/>
</dbReference>
<dbReference type="InterPro" id="IPR001849">
    <property type="entry name" value="PH_domain"/>
</dbReference>
<dbReference type="InterPro" id="IPR023394">
    <property type="entry name" value="Sec7_C_sf"/>
</dbReference>
<dbReference type="InterPro" id="IPR000904">
    <property type="entry name" value="Sec7_dom"/>
</dbReference>
<dbReference type="InterPro" id="IPR035999">
    <property type="entry name" value="Sec7_dom_sf"/>
</dbReference>
<dbReference type="PANTHER" id="PTHR10663">
    <property type="entry name" value="GUANYL-NUCLEOTIDE EXCHANGE FACTOR"/>
    <property type="match status" value="1"/>
</dbReference>
<dbReference type="PANTHER" id="PTHR10663:SF337">
    <property type="entry name" value="PH AND SEC7 DOMAIN-CONTAINING PROTEIN 3"/>
    <property type="match status" value="1"/>
</dbReference>
<dbReference type="Pfam" id="PF15410">
    <property type="entry name" value="PH_9"/>
    <property type="match status" value="1"/>
</dbReference>
<dbReference type="Pfam" id="PF01369">
    <property type="entry name" value="Sec7"/>
    <property type="match status" value="1"/>
</dbReference>
<dbReference type="SMART" id="SM00233">
    <property type="entry name" value="PH"/>
    <property type="match status" value="1"/>
</dbReference>
<dbReference type="SMART" id="SM00222">
    <property type="entry name" value="Sec7"/>
    <property type="match status" value="1"/>
</dbReference>
<dbReference type="SUPFAM" id="SSF50729">
    <property type="entry name" value="PH domain-like"/>
    <property type="match status" value="1"/>
</dbReference>
<dbReference type="SUPFAM" id="SSF48425">
    <property type="entry name" value="Sec7 domain"/>
    <property type="match status" value="1"/>
</dbReference>
<dbReference type="PROSITE" id="PS50003">
    <property type="entry name" value="PH_DOMAIN"/>
    <property type="match status" value="1"/>
</dbReference>
<dbReference type="PROSITE" id="PS50190">
    <property type="entry name" value="SEC7"/>
    <property type="match status" value="1"/>
</dbReference>
<name>PSD3_MOUSE</name>
<keyword id="KW-0025">Alternative splicing</keyword>
<keyword id="KW-1003">Cell membrane</keyword>
<keyword id="KW-0966">Cell projection</keyword>
<keyword id="KW-0175">Coiled coil</keyword>
<keyword id="KW-0344">Guanine-nucleotide releasing factor</keyword>
<keyword id="KW-0472">Membrane</keyword>
<keyword id="KW-0597">Phosphoprotein</keyword>
<keyword id="KW-1185">Reference proteome</keyword>
<keyword id="KW-0770">Synapse</keyword>
<reference key="1">
    <citation type="journal article" date="2006" name="Brain Res.">
        <title>Distinct spatiotemporal expression of EFA6D, a guanine nucleotide exchange factor for ARF6, among the EFA6 family in mouse brain.</title>
        <authorList>
            <person name="Sakagami H."/>
            <person name="Suzuki H."/>
            <person name="Kamata A."/>
            <person name="Owada Y."/>
            <person name="Fukunaga K."/>
            <person name="Mayanagi H."/>
            <person name="Kondo H."/>
        </authorList>
    </citation>
    <scope>NUCLEOTIDE SEQUENCE [MRNA] (ISOFORM 5)</scope>
    <scope>FUNCTION</scope>
    <scope>TISSUE SPECIFICITY</scope>
    <scope>DEVELOPMENTAL STAGE</scope>
    <scope>SUBCELLULAR LOCATION</scope>
    <source>
        <strain>C57BL/6J</strain>
        <tissue>Brain</tissue>
    </source>
</reference>
<reference key="2">
    <citation type="journal article" date="2005" name="Science">
        <title>The transcriptional landscape of the mammalian genome.</title>
        <authorList>
            <person name="Carninci P."/>
            <person name="Kasukawa T."/>
            <person name="Katayama S."/>
            <person name="Gough J."/>
            <person name="Frith M.C."/>
            <person name="Maeda N."/>
            <person name="Oyama R."/>
            <person name="Ravasi T."/>
            <person name="Lenhard B."/>
            <person name="Wells C."/>
            <person name="Kodzius R."/>
            <person name="Shimokawa K."/>
            <person name="Bajic V.B."/>
            <person name="Brenner S.E."/>
            <person name="Batalov S."/>
            <person name="Forrest A.R."/>
            <person name="Zavolan M."/>
            <person name="Davis M.J."/>
            <person name="Wilming L.G."/>
            <person name="Aidinis V."/>
            <person name="Allen J.E."/>
            <person name="Ambesi-Impiombato A."/>
            <person name="Apweiler R."/>
            <person name="Aturaliya R.N."/>
            <person name="Bailey T.L."/>
            <person name="Bansal M."/>
            <person name="Baxter L."/>
            <person name="Beisel K.W."/>
            <person name="Bersano T."/>
            <person name="Bono H."/>
            <person name="Chalk A.M."/>
            <person name="Chiu K.P."/>
            <person name="Choudhary V."/>
            <person name="Christoffels A."/>
            <person name="Clutterbuck D.R."/>
            <person name="Crowe M.L."/>
            <person name="Dalla E."/>
            <person name="Dalrymple B.P."/>
            <person name="de Bono B."/>
            <person name="Della Gatta G."/>
            <person name="di Bernardo D."/>
            <person name="Down T."/>
            <person name="Engstrom P."/>
            <person name="Fagiolini M."/>
            <person name="Faulkner G."/>
            <person name="Fletcher C.F."/>
            <person name="Fukushima T."/>
            <person name="Furuno M."/>
            <person name="Futaki S."/>
            <person name="Gariboldi M."/>
            <person name="Georgii-Hemming P."/>
            <person name="Gingeras T.R."/>
            <person name="Gojobori T."/>
            <person name="Green R.E."/>
            <person name="Gustincich S."/>
            <person name="Harbers M."/>
            <person name="Hayashi Y."/>
            <person name="Hensch T.K."/>
            <person name="Hirokawa N."/>
            <person name="Hill D."/>
            <person name="Huminiecki L."/>
            <person name="Iacono M."/>
            <person name="Ikeo K."/>
            <person name="Iwama A."/>
            <person name="Ishikawa T."/>
            <person name="Jakt M."/>
            <person name="Kanapin A."/>
            <person name="Katoh M."/>
            <person name="Kawasawa Y."/>
            <person name="Kelso J."/>
            <person name="Kitamura H."/>
            <person name="Kitano H."/>
            <person name="Kollias G."/>
            <person name="Krishnan S.P."/>
            <person name="Kruger A."/>
            <person name="Kummerfeld S.K."/>
            <person name="Kurochkin I.V."/>
            <person name="Lareau L.F."/>
            <person name="Lazarevic D."/>
            <person name="Lipovich L."/>
            <person name="Liu J."/>
            <person name="Liuni S."/>
            <person name="McWilliam S."/>
            <person name="Madan Babu M."/>
            <person name="Madera M."/>
            <person name="Marchionni L."/>
            <person name="Matsuda H."/>
            <person name="Matsuzawa S."/>
            <person name="Miki H."/>
            <person name="Mignone F."/>
            <person name="Miyake S."/>
            <person name="Morris K."/>
            <person name="Mottagui-Tabar S."/>
            <person name="Mulder N."/>
            <person name="Nakano N."/>
            <person name="Nakauchi H."/>
            <person name="Ng P."/>
            <person name="Nilsson R."/>
            <person name="Nishiguchi S."/>
            <person name="Nishikawa S."/>
            <person name="Nori F."/>
            <person name="Ohara O."/>
            <person name="Okazaki Y."/>
            <person name="Orlando V."/>
            <person name="Pang K.C."/>
            <person name="Pavan W.J."/>
            <person name="Pavesi G."/>
            <person name="Pesole G."/>
            <person name="Petrovsky N."/>
            <person name="Piazza S."/>
            <person name="Reed J."/>
            <person name="Reid J.F."/>
            <person name="Ring B.Z."/>
            <person name="Ringwald M."/>
            <person name="Rost B."/>
            <person name="Ruan Y."/>
            <person name="Salzberg S.L."/>
            <person name="Sandelin A."/>
            <person name="Schneider C."/>
            <person name="Schoenbach C."/>
            <person name="Sekiguchi K."/>
            <person name="Semple C.A."/>
            <person name="Seno S."/>
            <person name="Sessa L."/>
            <person name="Sheng Y."/>
            <person name="Shibata Y."/>
            <person name="Shimada H."/>
            <person name="Shimada K."/>
            <person name="Silva D."/>
            <person name="Sinclair B."/>
            <person name="Sperling S."/>
            <person name="Stupka E."/>
            <person name="Sugiura K."/>
            <person name="Sultana R."/>
            <person name="Takenaka Y."/>
            <person name="Taki K."/>
            <person name="Tammoja K."/>
            <person name="Tan S.L."/>
            <person name="Tang S."/>
            <person name="Taylor M.S."/>
            <person name="Tegner J."/>
            <person name="Teichmann S.A."/>
            <person name="Ueda H.R."/>
            <person name="van Nimwegen E."/>
            <person name="Verardo R."/>
            <person name="Wei C.L."/>
            <person name="Yagi K."/>
            <person name="Yamanishi H."/>
            <person name="Zabarovsky E."/>
            <person name="Zhu S."/>
            <person name="Zimmer A."/>
            <person name="Hide W."/>
            <person name="Bult C."/>
            <person name="Grimmond S.M."/>
            <person name="Teasdale R.D."/>
            <person name="Liu E.T."/>
            <person name="Brusic V."/>
            <person name="Quackenbush J."/>
            <person name="Wahlestedt C."/>
            <person name="Mattick J.S."/>
            <person name="Hume D.A."/>
            <person name="Kai C."/>
            <person name="Sasaki D."/>
            <person name="Tomaru Y."/>
            <person name="Fukuda S."/>
            <person name="Kanamori-Katayama M."/>
            <person name="Suzuki M."/>
            <person name="Aoki J."/>
            <person name="Arakawa T."/>
            <person name="Iida J."/>
            <person name="Imamura K."/>
            <person name="Itoh M."/>
            <person name="Kato T."/>
            <person name="Kawaji H."/>
            <person name="Kawagashira N."/>
            <person name="Kawashima T."/>
            <person name="Kojima M."/>
            <person name="Kondo S."/>
            <person name="Konno H."/>
            <person name="Nakano K."/>
            <person name="Ninomiya N."/>
            <person name="Nishio T."/>
            <person name="Okada M."/>
            <person name="Plessy C."/>
            <person name="Shibata K."/>
            <person name="Shiraki T."/>
            <person name="Suzuki S."/>
            <person name="Tagami M."/>
            <person name="Waki K."/>
            <person name="Watahiki A."/>
            <person name="Okamura-Oho Y."/>
            <person name="Suzuki H."/>
            <person name="Kawai J."/>
            <person name="Hayashizaki Y."/>
        </authorList>
    </citation>
    <scope>NUCLEOTIDE SEQUENCE [LARGE SCALE MRNA] (ISOFORM 3)</scope>
    <scope>NUCLEOTIDE SEQUENCE [LARGE SCALE MRNA] OF 1-729 (ISOFORM 2)</scope>
    <source>
        <strain>C57BL/6J</strain>
        <tissue>Skin</tissue>
        <tissue>Testis</tissue>
    </source>
</reference>
<reference key="3">
    <citation type="journal article" date="2003" name="DNA Res.">
        <title>Prediction of the coding sequences of mouse homologues of KIAA gene: II. The complete nucleotide sequences of 400 mouse KIAA-homologous cDNAs identified by screening of terminal sequences of cDNA clones randomly sampled from size-fractionated libraries.</title>
        <authorList>
            <person name="Okazaki N."/>
            <person name="Kikuno R."/>
            <person name="Ohara R."/>
            <person name="Inamoto S."/>
            <person name="Aizawa H."/>
            <person name="Yuasa S."/>
            <person name="Nakajima D."/>
            <person name="Nagase T."/>
            <person name="Ohara O."/>
            <person name="Koga H."/>
        </authorList>
    </citation>
    <scope>NUCLEOTIDE SEQUENCE [LARGE SCALE MRNA] OF 714-1037 (ISOFORM 4)</scope>
    <source>
        <tissue>Brain</tissue>
    </source>
</reference>
<reference key="4">
    <citation type="journal article" date="2004" name="Genome Res.">
        <title>The status, quality, and expansion of the NIH full-length cDNA project: the Mammalian Gene Collection (MGC).</title>
        <authorList>
            <consortium name="The MGC Project Team"/>
        </authorList>
    </citation>
    <scope>NUCLEOTIDE SEQUENCE [LARGE SCALE MRNA] OF 823-1037 (ISOFORM 1)</scope>
    <source>
        <strain>FVB/N</strain>
        <tissue>Mammary tumor</tissue>
    </source>
</reference>
<reference key="5">
    <citation type="journal article" date="2004" name="Mol. Cell. Proteomics">
        <title>Phosphoproteomic analysis of the developing mouse brain.</title>
        <authorList>
            <person name="Ballif B.A."/>
            <person name="Villen J."/>
            <person name="Beausoleil S.A."/>
            <person name="Schwartz D."/>
            <person name="Gygi S.P."/>
        </authorList>
    </citation>
    <scope>PHOSPHORYLATION [LARGE SCALE ANALYSIS] AT SER-1009</scope>
    <scope>IDENTIFICATION BY MASS SPECTROMETRY [LARGE SCALE ANALYSIS]</scope>
    <source>
        <tissue>Embryonic brain</tissue>
    </source>
</reference>
<reference key="6">
    <citation type="journal article" date="2006" name="Mol. Cell. Proteomics">
        <title>Comprehensive identification of phosphorylation sites in postsynaptic density preparations.</title>
        <authorList>
            <person name="Trinidad J.C."/>
            <person name="Specht C.G."/>
            <person name="Thalhammer A."/>
            <person name="Schoepfer R."/>
            <person name="Burlingame A.L."/>
        </authorList>
    </citation>
    <scope>PHOSPHORYLATION [LARGE SCALE ANALYSIS] AT SER-1009</scope>
    <scope>IDENTIFICATION BY MASS SPECTROMETRY [LARGE SCALE ANALYSIS]</scope>
    <source>
        <tissue>Brain</tissue>
    </source>
</reference>
<reference key="7">
    <citation type="journal article" date="2007" name="Proc. Natl. Acad. Sci. U.S.A.">
        <title>Large-scale phosphorylation analysis of mouse liver.</title>
        <authorList>
            <person name="Villen J."/>
            <person name="Beausoleil S.A."/>
            <person name="Gerber S.A."/>
            <person name="Gygi S.P."/>
        </authorList>
    </citation>
    <scope>PHOSPHORYLATION [LARGE SCALE ANALYSIS] AT SER-1009</scope>
    <scope>IDENTIFICATION BY MASS SPECTROMETRY [LARGE SCALE ANALYSIS]</scope>
    <source>
        <tissue>Liver</tissue>
    </source>
</reference>
<reference key="8">
    <citation type="journal article" date="2010" name="Cell">
        <title>A tissue-specific atlas of mouse protein phosphorylation and expression.</title>
        <authorList>
            <person name="Huttlin E.L."/>
            <person name="Jedrychowski M.P."/>
            <person name="Elias J.E."/>
            <person name="Goswami T."/>
            <person name="Rad R."/>
            <person name="Beausoleil S.A."/>
            <person name="Villen J."/>
            <person name="Haas W."/>
            <person name="Sowa M.E."/>
            <person name="Gygi S.P."/>
        </authorList>
    </citation>
    <scope>PHOSPHORYLATION [LARGE SCALE ANALYSIS] AT SER-759; SER-998; SER-1000; SER-1001; SER-1003 AND SER-1009</scope>
    <scope>IDENTIFICATION BY MASS SPECTROMETRY [LARGE SCALE ANALYSIS]</scope>
    <source>
        <tissue>Brain</tissue>
        <tissue>Kidney</tissue>
        <tissue>Liver</tissue>
        <tissue>Pancreas</tissue>
        <tissue>Spleen</tissue>
        <tissue>Testis</tissue>
    </source>
</reference>
<reference key="9">
    <citation type="journal article" date="2013" name="FEBS Lett.">
        <title>EFA6 activates Arf6 and participates in its targeting to the Flemming body during cytokinesis.</title>
        <authorList>
            <person name="Ueda T."/>
            <person name="Hanai A."/>
            <person name="Takei T."/>
            <person name="Kubo K."/>
            <person name="Ohgi M."/>
            <person name="Sakagami H."/>
            <person name="Takahashi S."/>
            <person name="Shin H.W."/>
            <person name="Nakayama K."/>
        </authorList>
    </citation>
    <scope>SUBCELLULAR LOCATION</scope>
</reference>
<feature type="chain" id="PRO_0000309454" description="PH and SEC7 domain-containing protein 3">
    <location>
        <begin position="1"/>
        <end position="1037"/>
    </location>
</feature>
<feature type="domain" description="SEC7" evidence="4">
    <location>
        <begin position="515"/>
        <end position="723"/>
    </location>
</feature>
<feature type="domain" description="PH" evidence="3">
    <location>
        <begin position="774"/>
        <end position="887"/>
    </location>
</feature>
<feature type="region of interest" description="Disordered" evidence="5">
    <location>
        <begin position="37"/>
        <end position="70"/>
    </location>
</feature>
<feature type="region of interest" description="Disordered" evidence="5">
    <location>
        <begin position="169"/>
        <end position="189"/>
    </location>
</feature>
<feature type="region of interest" description="Disordered" evidence="5">
    <location>
        <begin position="236"/>
        <end position="255"/>
    </location>
</feature>
<feature type="region of interest" description="Disordered" evidence="5">
    <location>
        <begin position="262"/>
        <end position="284"/>
    </location>
</feature>
<feature type="region of interest" description="Disordered" evidence="5">
    <location>
        <begin position="304"/>
        <end position="335"/>
    </location>
</feature>
<feature type="region of interest" description="Disordered" evidence="5">
    <location>
        <begin position="353"/>
        <end position="375"/>
    </location>
</feature>
<feature type="region of interest" description="Disordered" evidence="5">
    <location>
        <begin position="730"/>
        <end position="762"/>
    </location>
</feature>
<feature type="region of interest" description="Disordered" evidence="5">
    <location>
        <begin position="984"/>
        <end position="1037"/>
    </location>
</feature>
<feature type="coiled-coil region" evidence="2">
    <location>
        <begin position="911"/>
        <end position="941"/>
    </location>
</feature>
<feature type="compositionally biased region" description="Low complexity" evidence="5">
    <location>
        <begin position="237"/>
        <end position="251"/>
    </location>
</feature>
<feature type="compositionally biased region" description="Basic and acidic residues" evidence="5">
    <location>
        <begin position="262"/>
        <end position="277"/>
    </location>
</feature>
<feature type="compositionally biased region" description="Basic and acidic residues" evidence="5">
    <location>
        <begin position="730"/>
        <end position="747"/>
    </location>
</feature>
<feature type="compositionally biased region" description="Polar residues" evidence="5">
    <location>
        <begin position="750"/>
        <end position="762"/>
    </location>
</feature>
<feature type="compositionally biased region" description="Basic and acidic residues" evidence="5">
    <location>
        <begin position="1018"/>
        <end position="1028"/>
    </location>
</feature>
<feature type="modified residue" description="Phosphoserine" evidence="1">
    <location>
        <position position="76"/>
    </location>
</feature>
<feature type="modified residue" description="Phosphoserine" evidence="16">
    <location>
        <position position="759"/>
    </location>
</feature>
<feature type="modified residue" description="Phosphoserine" evidence="16">
    <location>
        <position position="998"/>
    </location>
</feature>
<feature type="modified residue" description="Phosphoserine" evidence="16">
    <location>
        <position position="1000"/>
    </location>
</feature>
<feature type="modified residue" description="Phosphoserine" evidence="16">
    <location>
        <position position="1001"/>
    </location>
</feature>
<feature type="modified residue" description="Phosphoserine" evidence="16">
    <location>
        <position position="1003"/>
    </location>
</feature>
<feature type="modified residue" description="Phosphoserine" evidence="13 14 15 16">
    <location>
        <position position="1009"/>
    </location>
</feature>
<feature type="splice variant" id="VSP_029157" description="In isoform 3." evidence="9">
    <location>
        <begin position="1"/>
        <end position="518"/>
    </location>
</feature>
<feature type="splice variant" id="VSP_029158" description="In isoform 5." evidence="10">
    <original>MEGRNAAAEPFVWVNSASAHSQSVAKAKYEFLFGKSEEKTPDSS</original>
    <variation>MGNCWSYSNLC</variation>
    <location>
        <begin position="1"/>
        <end position="44"/>
    </location>
</feature>
<feature type="splice variant" id="VSP_029159" description="In isoform 3." evidence="9">
    <original>TRGPQEIAFWGS</original>
    <variation>MGIIMCLIYCYC</variation>
    <location>
        <begin position="519"/>
        <end position="530"/>
    </location>
</feature>
<feature type="splice variant" id="VSP_029160" description="In isoform 3 and isoform 2." evidence="9">
    <location>
        <position position="684"/>
    </location>
</feature>
<feature type="splice variant" id="VSP_029161" description="In isoform 4." evidence="8">
    <location>
        <begin position="919"/>
        <end position="966"/>
    </location>
</feature>
<feature type="sequence conflict" description="In Ref. 2; BAC26065." evidence="12" ref="2">
    <original>D</original>
    <variation>E</variation>
    <location>
        <position position="190"/>
    </location>
</feature>
<gene>
    <name type="primary">Psd3</name>
    <name evidence="11" type="synonym">Efa6d</name>
    <name type="synonym">Kiaa0942</name>
</gene>